<comment type="function">
    <text>May be involved in the energy metabolism. Could be a molecular link between myofibrillar stretch-induced signaling pathways and muscle gene expression.</text>
</comment>
<comment type="subunit">
    <text evidence="1">Interacts with titin/TTN and MYPN.</text>
</comment>
<comment type="subcellular location">
    <subcellularLocation>
        <location>Nucleus</location>
    </subcellularLocation>
    <text evidence="1">Sarcomeric I-band and some intercalated disks.</text>
</comment>
<keyword id="KW-0040">ANK repeat</keyword>
<keyword id="KW-0175">Coiled coil</keyword>
<keyword id="KW-0539">Nucleus</keyword>
<keyword id="KW-1185">Reference proteome</keyword>
<keyword id="KW-0677">Repeat</keyword>
<name>ANR23_MOUSE</name>
<gene>
    <name type="primary">Ankrd23</name>
    <name type="synonym">Darp</name>
</gene>
<sequence length="306" mass="34348">MDFISIEQLVSGERVDRKALEFGRGVPDPGGWPSGWTLGPQEAVAREKLKLEEEKRKKLERFNSSRLTLDNLTDLENLVQRRRKKRQRHKVPPREPESGAEPQPQVPLEPVGLEMFLKAAAENQEALIDKYLADGGDPNAHDKLHRTALHWACLKGHRQLVNKLLAAGAAIEVRDLLDRTPVFWACRGGHLDILKRLLNQGAQVNAQDKIWSTPLHVAVRMGHSDCLEHLIECGAHINAQDKEGDTALHEAVRYGHHKATKLLLLYGAKLGVKNVASQTPVQLARDWQRGIRDALQAHVGHPRTRC</sequence>
<dbReference type="EMBL" id="AF492400">
    <property type="protein sequence ID" value="AAO24066.1"/>
    <property type="molecule type" value="mRNA"/>
</dbReference>
<dbReference type="CCDS" id="CCDS14882.1"/>
<dbReference type="RefSeq" id="NP_001297450.1">
    <property type="nucleotide sequence ID" value="NM_001310521.1"/>
</dbReference>
<dbReference type="RefSeq" id="NP_705722.2">
    <property type="nucleotide sequence ID" value="NM_153502.4"/>
</dbReference>
<dbReference type="SMR" id="Q812A3"/>
<dbReference type="FunCoup" id="Q812A3">
    <property type="interactions" value="53"/>
</dbReference>
<dbReference type="STRING" id="10090.ENSMUSP00000061168"/>
<dbReference type="iPTMnet" id="Q812A3"/>
<dbReference type="PhosphoSitePlus" id="Q812A3"/>
<dbReference type="PaxDb" id="10090-ENSMUSP00000061168"/>
<dbReference type="ProteomicsDB" id="281997"/>
<dbReference type="DNASU" id="78321"/>
<dbReference type="Ensembl" id="ENSMUST00000054665.10">
    <property type="protein sequence ID" value="ENSMUSP00000061168.5"/>
    <property type="gene ID" value="ENSMUSG00000067653.13"/>
</dbReference>
<dbReference type="GeneID" id="78321"/>
<dbReference type="KEGG" id="mmu:78321"/>
<dbReference type="UCSC" id="uc007aql.1">
    <property type="organism name" value="mouse"/>
</dbReference>
<dbReference type="AGR" id="MGI:1925571"/>
<dbReference type="CTD" id="200539"/>
<dbReference type="MGI" id="MGI:1925571">
    <property type="gene designation" value="Ankrd23"/>
</dbReference>
<dbReference type="VEuPathDB" id="HostDB:ENSMUSG00000067653"/>
<dbReference type="eggNOG" id="KOG0504">
    <property type="taxonomic scope" value="Eukaryota"/>
</dbReference>
<dbReference type="GeneTree" id="ENSGT00940000161920"/>
<dbReference type="HOGENOM" id="CLU_000134_11_2_1"/>
<dbReference type="InParanoid" id="Q812A3"/>
<dbReference type="OMA" id="AGPWWES"/>
<dbReference type="OrthoDB" id="9995210at2759"/>
<dbReference type="PhylomeDB" id="Q812A3"/>
<dbReference type="TreeFam" id="TF331650"/>
<dbReference type="BioGRID-ORCS" id="78321">
    <property type="hits" value="2 hits in 80 CRISPR screens"/>
</dbReference>
<dbReference type="ChiTaRS" id="Ankrd23">
    <property type="organism name" value="mouse"/>
</dbReference>
<dbReference type="PRO" id="PR:Q812A3"/>
<dbReference type="Proteomes" id="UP000000589">
    <property type="component" value="Chromosome 1"/>
</dbReference>
<dbReference type="RNAct" id="Q812A3">
    <property type="molecule type" value="protein"/>
</dbReference>
<dbReference type="Bgee" id="ENSMUSG00000067653">
    <property type="expression patterns" value="Expressed in quadriceps femoris and 63 other cell types or tissues"/>
</dbReference>
<dbReference type="ExpressionAtlas" id="Q812A3">
    <property type="expression patterns" value="baseline and differential"/>
</dbReference>
<dbReference type="GO" id="GO:0015629">
    <property type="term" value="C:actin cytoskeleton"/>
    <property type="evidence" value="ECO:0007669"/>
    <property type="project" value="Ensembl"/>
</dbReference>
<dbReference type="GO" id="GO:0005829">
    <property type="term" value="C:cytosol"/>
    <property type="evidence" value="ECO:0007669"/>
    <property type="project" value="Ensembl"/>
</dbReference>
<dbReference type="GO" id="GO:0031674">
    <property type="term" value="C:I band"/>
    <property type="evidence" value="ECO:0000314"/>
    <property type="project" value="MGI"/>
</dbReference>
<dbReference type="GO" id="GO:0014704">
    <property type="term" value="C:intercalated disc"/>
    <property type="evidence" value="ECO:0007669"/>
    <property type="project" value="Ensembl"/>
</dbReference>
<dbReference type="GO" id="GO:0005654">
    <property type="term" value="C:nucleoplasm"/>
    <property type="evidence" value="ECO:0007669"/>
    <property type="project" value="Ensembl"/>
</dbReference>
<dbReference type="GO" id="GO:0005634">
    <property type="term" value="C:nucleus"/>
    <property type="evidence" value="ECO:0000314"/>
    <property type="project" value="MGI"/>
</dbReference>
<dbReference type="GO" id="GO:0031432">
    <property type="term" value="F:titin binding"/>
    <property type="evidence" value="ECO:0007669"/>
    <property type="project" value="Ensembl"/>
</dbReference>
<dbReference type="GO" id="GO:0006631">
    <property type="term" value="P:fatty acid metabolic process"/>
    <property type="evidence" value="ECO:0000314"/>
    <property type="project" value="MGI"/>
</dbReference>
<dbReference type="GO" id="GO:0060297">
    <property type="term" value="P:regulation of sarcomere organization"/>
    <property type="evidence" value="ECO:0000316"/>
    <property type="project" value="MGI"/>
</dbReference>
<dbReference type="GO" id="GO:0035994">
    <property type="term" value="P:response to muscle stretch"/>
    <property type="evidence" value="ECO:0000316"/>
    <property type="project" value="MGI"/>
</dbReference>
<dbReference type="FunFam" id="1.25.40.20:FF:000413">
    <property type="entry name" value="Ankyrin repeat domain 23"/>
    <property type="match status" value="1"/>
</dbReference>
<dbReference type="FunFam" id="1.25.40.20:FF:000093">
    <property type="entry name" value="ankyrin repeat domain-containing protein 2"/>
    <property type="match status" value="1"/>
</dbReference>
<dbReference type="Gene3D" id="1.25.40.20">
    <property type="entry name" value="Ankyrin repeat-containing domain"/>
    <property type="match status" value="2"/>
</dbReference>
<dbReference type="InterPro" id="IPR050663">
    <property type="entry name" value="Ankyrin-SOCS_Box"/>
</dbReference>
<dbReference type="InterPro" id="IPR002110">
    <property type="entry name" value="Ankyrin_rpt"/>
</dbReference>
<dbReference type="InterPro" id="IPR036770">
    <property type="entry name" value="Ankyrin_rpt-contain_sf"/>
</dbReference>
<dbReference type="PANTHER" id="PTHR24193:SF122">
    <property type="entry name" value="ANKYRIN REPEAT DOMAIN-CONTAINING PROTEIN 23"/>
    <property type="match status" value="1"/>
</dbReference>
<dbReference type="PANTHER" id="PTHR24193">
    <property type="entry name" value="ANKYRIN REPEAT PROTEIN"/>
    <property type="match status" value="1"/>
</dbReference>
<dbReference type="Pfam" id="PF00023">
    <property type="entry name" value="Ank"/>
    <property type="match status" value="2"/>
</dbReference>
<dbReference type="Pfam" id="PF12796">
    <property type="entry name" value="Ank_2"/>
    <property type="match status" value="1"/>
</dbReference>
<dbReference type="PRINTS" id="PR01415">
    <property type="entry name" value="ANKYRIN"/>
</dbReference>
<dbReference type="SMART" id="SM00248">
    <property type="entry name" value="ANK"/>
    <property type="match status" value="4"/>
</dbReference>
<dbReference type="SUPFAM" id="SSF48403">
    <property type="entry name" value="Ankyrin repeat"/>
    <property type="match status" value="1"/>
</dbReference>
<dbReference type="PROSITE" id="PS50297">
    <property type="entry name" value="ANK_REP_REGION"/>
    <property type="match status" value="1"/>
</dbReference>
<dbReference type="PROSITE" id="PS50088">
    <property type="entry name" value="ANK_REPEAT"/>
    <property type="match status" value="4"/>
</dbReference>
<evidence type="ECO:0000250" key="1"/>
<evidence type="ECO:0000255" key="2"/>
<evidence type="ECO:0000256" key="3">
    <source>
        <dbReference type="SAM" id="MobiDB-lite"/>
    </source>
</evidence>
<protein>
    <recommendedName>
        <fullName>Ankyrin repeat domain-containing protein 23</fullName>
    </recommendedName>
    <alternativeName>
        <fullName>Diabetes-related ankyrin repeat protein</fullName>
    </alternativeName>
</protein>
<organism>
    <name type="scientific">Mus musculus</name>
    <name type="common">Mouse</name>
    <dbReference type="NCBI Taxonomy" id="10090"/>
    <lineage>
        <taxon>Eukaryota</taxon>
        <taxon>Metazoa</taxon>
        <taxon>Chordata</taxon>
        <taxon>Craniata</taxon>
        <taxon>Vertebrata</taxon>
        <taxon>Euteleostomi</taxon>
        <taxon>Mammalia</taxon>
        <taxon>Eutheria</taxon>
        <taxon>Euarchontoglires</taxon>
        <taxon>Glires</taxon>
        <taxon>Rodentia</taxon>
        <taxon>Myomorpha</taxon>
        <taxon>Muroidea</taxon>
        <taxon>Muridae</taxon>
        <taxon>Murinae</taxon>
        <taxon>Mus</taxon>
        <taxon>Mus</taxon>
    </lineage>
</organism>
<accession>Q812A3</accession>
<feature type="chain" id="PRO_0000240667" description="Ankyrin repeat domain-containing protein 23">
    <location>
        <begin position="1"/>
        <end position="306"/>
    </location>
</feature>
<feature type="repeat" description="ANK 1">
    <location>
        <begin position="144"/>
        <end position="173"/>
    </location>
</feature>
<feature type="repeat" description="ANK 2">
    <location>
        <begin position="177"/>
        <end position="206"/>
    </location>
</feature>
<feature type="repeat" description="ANK 3">
    <location>
        <begin position="210"/>
        <end position="239"/>
    </location>
</feature>
<feature type="repeat" description="ANK 4">
    <location>
        <begin position="243"/>
        <end position="272"/>
    </location>
</feature>
<feature type="region of interest" description="Disordered" evidence="3">
    <location>
        <begin position="78"/>
        <end position="107"/>
    </location>
</feature>
<feature type="region of interest" description="Interaction with TTN" evidence="1">
    <location>
        <begin position="179"/>
        <end position="196"/>
    </location>
</feature>
<feature type="coiled-coil region" evidence="2">
    <location>
        <begin position="41"/>
        <end position="90"/>
    </location>
</feature>
<feature type="compositionally biased region" description="Basic residues" evidence="3">
    <location>
        <begin position="80"/>
        <end position="91"/>
    </location>
</feature>
<reference key="1">
    <citation type="journal article" date="2003" name="J. Biol. Chem.">
        <title>Molecular identification and characterization of a novel nuclear protein whose expression is up-regulated in insulin-resistant animals.</title>
        <authorList>
            <person name="Ikeda K."/>
            <person name="Emoto N."/>
            <person name="Matsuo M."/>
            <person name="Yokoyama M."/>
        </authorList>
    </citation>
    <scope>NUCLEOTIDE SEQUENCE [MRNA]</scope>
    <source>
        <strain>C57BL/6J</strain>
    </source>
</reference>
<proteinExistence type="evidence at transcript level"/>